<protein>
    <recommendedName>
        <fullName evidence="1">Large ribosomal subunit protein bL25</fullName>
    </recommendedName>
    <alternativeName>
        <fullName evidence="2">50S ribosomal protein L25</fullName>
    </alternativeName>
    <alternativeName>
        <fullName evidence="1">General stress protein CTC</fullName>
    </alternativeName>
</protein>
<reference key="1">
    <citation type="journal article" date="1998" name="Science">
        <title>Genome sequence of an obligate intracellular pathogen of humans: Chlamydia trachomatis.</title>
        <authorList>
            <person name="Stephens R.S."/>
            <person name="Kalman S."/>
            <person name="Lammel C.J."/>
            <person name="Fan J."/>
            <person name="Marathe R."/>
            <person name="Aravind L."/>
            <person name="Mitchell W.P."/>
            <person name="Olinger L."/>
            <person name="Tatusov R.L."/>
            <person name="Zhao Q."/>
            <person name="Koonin E.V."/>
            <person name="Davis R.W."/>
        </authorList>
    </citation>
    <scope>NUCLEOTIDE SEQUENCE [LARGE SCALE GENOMIC DNA]</scope>
    <source>
        <strain>ATCC VR-885 / DSM 19411 / UW-3/Cx</strain>
    </source>
</reference>
<evidence type="ECO:0000255" key="1">
    <source>
        <dbReference type="HAMAP-Rule" id="MF_01334"/>
    </source>
</evidence>
<evidence type="ECO:0000305" key="2"/>
<organism>
    <name type="scientific">Chlamydia trachomatis serovar D (strain ATCC VR-885 / DSM 19411 / UW-3/Cx)</name>
    <dbReference type="NCBI Taxonomy" id="272561"/>
    <lineage>
        <taxon>Bacteria</taxon>
        <taxon>Pseudomonadati</taxon>
        <taxon>Chlamydiota</taxon>
        <taxon>Chlamydiia</taxon>
        <taxon>Chlamydiales</taxon>
        <taxon>Chlamydiaceae</taxon>
        <taxon>Chlamydia/Chlamydophila group</taxon>
        <taxon>Chlamydia</taxon>
    </lineage>
</organism>
<keyword id="KW-1185">Reference proteome</keyword>
<keyword id="KW-0687">Ribonucleoprotein</keyword>
<keyword id="KW-0689">Ribosomal protein</keyword>
<keyword id="KW-0694">RNA-binding</keyword>
<keyword id="KW-0699">rRNA-binding</keyword>
<dbReference type="EMBL" id="AE001273">
    <property type="protein sequence ID" value="AAC68394.1"/>
    <property type="molecule type" value="Genomic_DNA"/>
</dbReference>
<dbReference type="PIR" id="E71469">
    <property type="entry name" value="E71469"/>
</dbReference>
<dbReference type="RefSeq" id="NP_220319.1">
    <property type="nucleotide sequence ID" value="NC_000117.1"/>
</dbReference>
<dbReference type="RefSeq" id="WP_009872181.1">
    <property type="nucleotide sequence ID" value="NC_000117.1"/>
</dbReference>
<dbReference type="SMR" id="O84805"/>
<dbReference type="FunCoup" id="O84805">
    <property type="interactions" value="187"/>
</dbReference>
<dbReference type="STRING" id="272561.CT_799"/>
<dbReference type="EnsemblBacteria" id="AAC68394">
    <property type="protein sequence ID" value="AAC68394"/>
    <property type="gene ID" value="CT_799"/>
</dbReference>
<dbReference type="GeneID" id="884205"/>
<dbReference type="KEGG" id="ctr:CT_799"/>
<dbReference type="PATRIC" id="fig|272561.5.peg.880"/>
<dbReference type="HOGENOM" id="CLU_075939_2_1_0"/>
<dbReference type="InParanoid" id="O84805"/>
<dbReference type="OrthoDB" id="17764at2"/>
<dbReference type="Proteomes" id="UP000000431">
    <property type="component" value="Chromosome"/>
</dbReference>
<dbReference type="GO" id="GO:0022625">
    <property type="term" value="C:cytosolic large ribosomal subunit"/>
    <property type="evidence" value="ECO:0000318"/>
    <property type="project" value="GO_Central"/>
</dbReference>
<dbReference type="GO" id="GO:0008097">
    <property type="term" value="F:5S rRNA binding"/>
    <property type="evidence" value="ECO:0000318"/>
    <property type="project" value="GO_Central"/>
</dbReference>
<dbReference type="GO" id="GO:0003735">
    <property type="term" value="F:structural constituent of ribosome"/>
    <property type="evidence" value="ECO:0007669"/>
    <property type="project" value="InterPro"/>
</dbReference>
<dbReference type="GO" id="GO:0006412">
    <property type="term" value="P:translation"/>
    <property type="evidence" value="ECO:0000318"/>
    <property type="project" value="GO_Central"/>
</dbReference>
<dbReference type="CDD" id="cd00495">
    <property type="entry name" value="Ribosomal_L25_TL5_CTC"/>
    <property type="match status" value="1"/>
</dbReference>
<dbReference type="FunFam" id="2.170.120.20:FF:000014">
    <property type="entry name" value="50S ribosomal protein L25"/>
    <property type="match status" value="1"/>
</dbReference>
<dbReference type="Gene3D" id="2.170.120.20">
    <property type="entry name" value="Ribosomal protein L25, beta domain"/>
    <property type="match status" value="1"/>
</dbReference>
<dbReference type="Gene3D" id="2.40.240.10">
    <property type="entry name" value="Ribosomal Protein L25, Chain P"/>
    <property type="match status" value="1"/>
</dbReference>
<dbReference type="HAMAP" id="MF_01334">
    <property type="entry name" value="Ribosomal_bL25_CTC"/>
    <property type="match status" value="1"/>
</dbReference>
<dbReference type="InterPro" id="IPR020056">
    <property type="entry name" value="Rbsml_bL25/Gln-tRNA_synth_N"/>
</dbReference>
<dbReference type="InterPro" id="IPR011035">
    <property type="entry name" value="Ribosomal_bL25/Gln-tRNA_synth"/>
</dbReference>
<dbReference type="InterPro" id="IPR020057">
    <property type="entry name" value="Ribosomal_bL25_b-dom"/>
</dbReference>
<dbReference type="InterPro" id="IPR037121">
    <property type="entry name" value="Ribosomal_bL25_C"/>
</dbReference>
<dbReference type="InterPro" id="IPR001021">
    <property type="entry name" value="Ribosomal_bL25_long"/>
</dbReference>
<dbReference type="InterPro" id="IPR029751">
    <property type="entry name" value="Ribosomal_L25_dom"/>
</dbReference>
<dbReference type="InterPro" id="IPR020930">
    <property type="entry name" value="Ribosomal_uL5_bac-type"/>
</dbReference>
<dbReference type="NCBIfam" id="TIGR00731">
    <property type="entry name" value="bL25_bact_ctc"/>
    <property type="match status" value="1"/>
</dbReference>
<dbReference type="NCBIfam" id="NF004129">
    <property type="entry name" value="PRK05618.1-4"/>
    <property type="match status" value="1"/>
</dbReference>
<dbReference type="PANTHER" id="PTHR33284">
    <property type="entry name" value="RIBOSOMAL PROTEIN L25/GLN-TRNA SYNTHETASE, ANTI-CODON-BINDING DOMAIN-CONTAINING PROTEIN"/>
    <property type="match status" value="1"/>
</dbReference>
<dbReference type="PANTHER" id="PTHR33284:SF1">
    <property type="entry name" value="RIBOSOMAL PROTEIN L25_GLN-TRNA SYNTHETASE, ANTI-CODON-BINDING DOMAIN-CONTAINING PROTEIN"/>
    <property type="match status" value="1"/>
</dbReference>
<dbReference type="Pfam" id="PF01386">
    <property type="entry name" value="Ribosomal_L25p"/>
    <property type="match status" value="1"/>
</dbReference>
<dbReference type="Pfam" id="PF14693">
    <property type="entry name" value="Ribosomal_TL5_C"/>
    <property type="match status" value="1"/>
</dbReference>
<dbReference type="SUPFAM" id="SSF50715">
    <property type="entry name" value="Ribosomal protein L25-like"/>
    <property type="match status" value="1"/>
</dbReference>
<proteinExistence type="inferred from homology"/>
<gene>
    <name evidence="1" type="primary">rplY</name>
    <name evidence="1" type="synonym">ctc</name>
    <name type="ordered locus">CT_799</name>
</gene>
<name>RL25_CHLTR</name>
<sequence length="185" mass="20439">MELVVQSRETDKKSVIKKIRQQGGIPAVLYSGGKSLANIVVDARVFSKFLSTLESGALASTVFTLSYEGREIKALVKDIQYHVTTYDVIHLDFEELVDGRDVRLNIPIRCINTVDCVGVKLGGSLRQVIRCIRVVCKPKDIVPFLELDVQSLGLSQTLKLSDICIPEGIRPVTSLKEVAVTVARR</sequence>
<feature type="chain" id="PRO_0000181536" description="Large ribosomal subunit protein bL25">
    <location>
        <begin position="1"/>
        <end position="185"/>
    </location>
</feature>
<accession>O84805</accession>
<comment type="function">
    <text evidence="1">This is one of the proteins that binds to the 5S RNA in the ribosome where it forms part of the central protuberance.</text>
</comment>
<comment type="subunit">
    <text evidence="1">Part of the 50S ribosomal subunit; part of the 5S rRNA/L5/L18/L25 subcomplex. Contacts the 5S rRNA. Binds to the 5S rRNA independently of L5 and L18.</text>
</comment>
<comment type="similarity">
    <text evidence="1">Belongs to the bacterial ribosomal protein bL25 family. CTC subfamily.</text>
</comment>